<proteinExistence type="inferred from homology"/>
<protein>
    <recommendedName>
        <fullName>Phosphate regulon transcriptional regulatory protein PhoB</fullName>
    </recommendedName>
</protein>
<accession>P45605</accession>
<sequence length="229" mass="26379">MARRILVVEDEAPIREMVCFVLEQNGFQPVEAEDYDSAVNQLNEPWPDLILLDWMLPGGSGLQFIKLLKREAMTRDIPVVMLTARGEEEDRVRGLETGADDYITKPFSPKELVARIKAVMRRISPMAVEEVIEMQGLSLDPSSHRVMTGDSPLDMGPTEFKLLHFFMTHPERVYSREQLLNHVWGTNVYVEDRTVDVHIRRLRKALEHSGHDRMVQTVRGTGYRFSARF</sequence>
<gene>
    <name type="primary">phoB</name>
</gene>
<dbReference type="EMBL" id="M31794">
    <property type="protein sequence ID" value="AAA25122.1"/>
    <property type="molecule type" value="Genomic_DNA"/>
</dbReference>
<dbReference type="PIR" id="C44753">
    <property type="entry name" value="C44753"/>
</dbReference>
<dbReference type="RefSeq" id="WP_002890343.1">
    <property type="nucleotide sequence ID" value="NZ_WYAM01000013.1"/>
</dbReference>
<dbReference type="SMR" id="P45605"/>
<dbReference type="GeneID" id="93274762"/>
<dbReference type="OMA" id="MDVDRHT"/>
<dbReference type="GO" id="GO:0005829">
    <property type="term" value="C:cytosol"/>
    <property type="evidence" value="ECO:0007669"/>
    <property type="project" value="TreeGrafter"/>
</dbReference>
<dbReference type="GO" id="GO:0032993">
    <property type="term" value="C:protein-DNA complex"/>
    <property type="evidence" value="ECO:0007669"/>
    <property type="project" value="TreeGrafter"/>
</dbReference>
<dbReference type="GO" id="GO:0000156">
    <property type="term" value="F:phosphorelay response regulator activity"/>
    <property type="evidence" value="ECO:0007669"/>
    <property type="project" value="InterPro"/>
</dbReference>
<dbReference type="GO" id="GO:0000976">
    <property type="term" value="F:transcription cis-regulatory region binding"/>
    <property type="evidence" value="ECO:0007669"/>
    <property type="project" value="TreeGrafter"/>
</dbReference>
<dbReference type="GO" id="GO:0006817">
    <property type="term" value="P:phosphate ion transport"/>
    <property type="evidence" value="ECO:0007669"/>
    <property type="project" value="UniProtKB-KW"/>
</dbReference>
<dbReference type="GO" id="GO:0006355">
    <property type="term" value="P:regulation of DNA-templated transcription"/>
    <property type="evidence" value="ECO:0007669"/>
    <property type="project" value="InterPro"/>
</dbReference>
<dbReference type="CDD" id="cd17618">
    <property type="entry name" value="REC_OmpR_PhoB"/>
    <property type="match status" value="1"/>
</dbReference>
<dbReference type="CDD" id="cd00383">
    <property type="entry name" value="trans_reg_C"/>
    <property type="match status" value="1"/>
</dbReference>
<dbReference type="FunFam" id="3.40.50.2300:FF:000001">
    <property type="entry name" value="DNA-binding response regulator PhoB"/>
    <property type="match status" value="1"/>
</dbReference>
<dbReference type="FunFam" id="1.10.10.10:FF:000011">
    <property type="entry name" value="Phosphate regulon transcriptional regulator PhoB"/>
    <property type="match status" value="1"/>
</dbReference>
<dbReference type="Gene3D" id="3.40.50.2300">
    <property type="match status" value="1"/>
</dbReference>
<dbReference type="Gene3D" id="6.10.250.690">
    <property type="match status" value="1"/>
</dbReference>
<dbReference type="Gene3D" id="1.10.10.10">
    <property type="entry name" value="Winged helix-like DNA-binding domain superfamily/Winged helix DNA-binding domain"/>
    <property type="match status" value="1"/>
</dbReference>
<dbReference type="InterPro" id="IPR011006">
    <property type="entry name" value="CheY-like_superfamily"/>
</dbReference>
<dbReference type="InterPro" id="IPR001867">
    <property type="entry name" value="OmpR/PhoB-type_DNA-bd"/>
</dbReference>
<dbReference type="InterPro" id="IPR011879">
    <property type="entry name" value="Sig_transdc_resp-reg_PhoB"/>
</dbReference>
<dbReference type="InterPro" id="IPR001789">
    <property type="entry name" value="Sig_transdc_resp-reg_receiver"/>
</dbReference>
<dbReference type="InterPro" id="IPR039420">
    <property type="entry name" value="WalR-like"/>
</dbReference>
<dbReference type="InterPro" id="IPR036388">
    <property type="entry name" value="WH-like_DNA-bd_sf"/>
</dbReference>
<dbReference type="NCBIfam" id="TIGR02154">
    <property type="entry name" value="PhoB"/>
    <property type="match status" value="1"/>
</dbReference>
<dbReference type="NCBIfam" id="NF007546">
    <property type="entry name" value="PRK10161.1"/>
    <property type="match status" value="1"/>
</dbReference>
<dbReference type="PANTHER" id="PTHR48111:SF40">
    <property type="entry name" value="PHOSPHATE REGULON TRANSCRIPTIONAL REGULATORY PROTEIN PHOB"/>
    <property type="match status" value="1"/>
</dbReference>
<dbReference type="PANTHER" id="PTHR48111">
    <property type="entry name" value="REGULATOR OF RPOS"/>
    <property type="match status" value="1"/>
</dbReference>
<dbReference type="Pfam" id="PF00072">
    <property type="entry name" value="Response_reg"/>
    <property type="match status" value="1"/>
</dbReference>
<dbReference type="Pfam" id="PF00486">
    <property type="entry name" value="Trans_reg_C"/>
    <property type="match status" value="1"/>
</dbReference>
<dbReference type="SMART" id="SM00448">
    <property type="entry name" value="REC"/>
    <property type="match status" value="1"/>
</dbReference>
<dbReference type="SMART" id="SM00862">
    <property type="entry name" value="Trans_reg_C"/>
    <property type="match status" value="1"/>
</dbReference>
<dbReference type="SUPFAM" id="SSF52172">
    <property type="entry name" value="CheY-like"/>
    <property type="match status" value="1"/>
</dbReference>
<dbReference type="PROSITE" id="PS51755">
    <property type="entry name" value="OMPR_PHOB"/>
    <property type="match status" value="1"/>
</dbReference>
<dbReference type="PROSITE" id="PS50110">
    <property type="entry name" value="RESPONSE_REGULATORY"/>
    <property type="match status" value="1"/>
</dbReference>
<organism>
    <name type="scientific">Klebsiella pneumoniae</name>
    <dbReference type="NCBI Taxonomy" id="573"/>
    <lineage>
        <taxon>Bacteria</taxon>
        <taxon>Pseudomonadati</taxon>
        <taxon>Pseudomonadota</taxon>
        <taxon>Gammaproteobacteria</taxon>
        <taxon>Enterobacterales</taxon>
        <taxon>Enterobacteriaceae</taxon>
        <taxon>Klebsiella/Raoultella group</taxon>
        <taxon>Klebsiella</taxon>
        <taxon>Klebsiella pneumoniae complex</taxon>
    </lineage>
</organism>
<comment type="function">
    <text>This protein is a positive regulator for the phosphate regulon. Transcription of this operon is positively regulated by PhoB and PhoR when phosphate is limited.</text>
</comment>
<comment type="subcellular location">
    <subcellularLocation>
        <location>Cytoplasm</location>
    </subcellularLocation>
</comment>
<comment type="PTM">
    <text evidence="1">Phosphorylated by PhoR.</text>
</comment>
<keyword id="KW-0010">Activator</keyword>
<keyword id="KW-0963">Cytoplasm</keyword>
<keyword id="KW-0238">DNA-binding</keyword>
<keyword id="KW-0592">Phosphate transport</keyword>
<keyword id="KW-0597">Phosphoprotein</keyword>
<keyword id="KW-0804">Transcription</keyword>
<keyword id="KW-0805">Transcription regulation</keyword>
<keyword id="KW-0813">Transport</keyword>
<keyword id="KW-0902">Two-component regulatory system</keyword>
<name>PHOB_KLEPN</name>
<reference key="1">
    <citation type="journal article" date="1989" name="J. Bacteriol.">
        <title>Phosphate regulon in members of the family Enterobacteriaceae: comparison of the phoB-phoR operons of Escherichia coli, Shigella dysenteriae, and Klebsiella pneumoniae.</title>
        <authorList>
            <person name="Lee T.Y."/>
            <person name="Makino K."/>
            <person name="Shinagawa H."/>
            <person name="Amemura M."/>
            <person name="Nakata A."/>
        </authorList>
    </citation>
    <scope>NUCLEOTIDE SEQUENCE [GENOMIC DNA]</scope>
</reference>
<evidence type="ECO:0000250" key="1"/>
<evidence type="ECO:0000255" key="2">
    <source>
        <dbReference type="PROSITE-ProRule" id="PRU00169"/>
    </source>
</evidence>
<evidence type="ECO:0000255" key="3">
    <source>
        <dbReference type="PROSITE-ProRule" id="PRU01091"/>
    </source>
</evidence>
<feature type="chain" id="PRO_0000081189" description="Phosphate regulon transcriptional regulatory protein PhoB">
    <location>
        <begin position="1"/>
        <end position="229"/>
    </location>
</feature>
<feature type="domain" description="Response regulatory" evidence="2">
    <location>
        <begin position="4"/>
        <end position="120"/>
    </location>
</feature>
<feature type="DNA-binding region" description="OmpR/PhoB-type" evidence="3">
    <location>
        <begin position="129"/>
        <end position="227"/>
    </location>
</feature>
<feature type="modified residue" description="4-aspartylphosphate" evidence="2">
    <location>
        <position position="53"/>
    </location>
</feature>